<gene>
    <name type="primary">irf2bpl-b</name>
    <name type="synonym">eap1-b</name>
</gene>
<comment type="subcellular location">
    <subcellularLocation>
        <location evidence="1">Nucleus</location>
    </subcellularLocation>
</comment>
<comment type="similarity">
    <text evidence="4">Belongs to the IRF2BP family.</text>
</comment>
<dbReference type="EMBL" id="BC059332">
    <property type="protein sequence ID" value="AAH59332.1"/>
    <property type="molecule type" value="mRNA"/>
</dbReference>
<dbReference type="RefSeq" id="NP_001080026.1">
    <property type="nucleotide sequence ID" value="NM_001086557.1"/>
</dbReference>
<dbReference type="SMR" id="Q6PCG7"/>
<dbReference type="DNASU" id="379718"/>
<dbReference type="GeneID" id="379718"/>
<dbReference type="KEGG" id="xla:379718"/>
<dbReference type="AGR" id="Xenbase:XB-GENE-6254961"/>
<dbReference type="CTD" id="379718"/>
<dbReference type="OrthoDB" id="10065080at2759"/>
<dbReference type="Proteomes" id="UP000186698">
    <property type="component" value="Chromosome 8S"/>
</dbReference>
<dbReference type="Bgee" id="379718">
    <property type="expression patterns" value="Expressed in lung and 19 other cell types or tissues"/>
</dbReference>
<dbReference type="GO" id="GO:0005634">
    <property type="term" value="C:nucleus"/>
    <property type="evidence" value="ECO:0000318"/>
    <property type="project" value="GO_Central"/>
</dbReference>
<dbReference type="GO" id="GO:0003714">
    <property type="term" value="F:transcription corepressor activity"/>
    <property type="evidence" value="ECO:0000318"/>
    <property type="project" value="GO_Central"/>
</dbReference>
<dbReference type="GO" id="GO:0008270">
    <property type="term" value="F:zinc ion binding"/>
    <property type="evidence" value="ECO:0007669"/>
    <property type="project" value="UniProtKB-KW"/>
</dbReference>
<dbReference type="GO" id="GO:0006357">
    <property type="term" value="P:regulation of transcription by RNA polymerase II"/>
    <property type="evidence" value="ECO:0000318"/>
    <property type="project" value="GO_Central"/>
</dbReference>
<dbReference type="CDD" id="cd16717">
    <property type="entry name" value="vRING-HC_IRF2BPL"/>
    <property type="match status" value="1"/>
</dbReference>
<dbReference type="FunFam" id="1.10.10.1580:FF:000001">
    <property type="entry name" value="interferon regulatory factor 2-binding protein 2"/>
    <property type="match status" value="1"/>
</dbReference>
<dbReference type="Gene3D" id="1.10.10.1580">
    <property type="entry name" value="Interferon regulatory factor 2-binding protein"/>
    <property type="match status" value="1"/>
</dbReference>
<dbReference type="InterPro" id="IPR044882">
    <property type="entry name" value="I2BP1/2_C3HC4-RING_sf"/>
</dbReference>
<dbReference type="InterPro" id="IPR022750">
    <property type="entry name" value="Interferon_reg_fac2-bd1_2_Znf"/>
</dbReference>
<dbReference type="PANTHER" id="PTHR10816:SF14">
    <property type="entry name" value="E3 UBIQUITIN-PROTEIN LIGASE IRF2BPL-RELATED"/>
    <property type="match status" value="1"/>
</dbReference>
<dbReference type="PANTHER" id="PTHR10816">
    <property type="entry name" value="MYELIN TRANSCRIPTION FACTOR 1-RELATED"/>
    <property type="match status" value="1"/>
</dbReference>
<dbReference type="Pfam" id="PF11261">
    <property type="entry name" value="IRF-2BP1_2"/>
    <property type="match status" value="1"/>
</dbReference>
<dbReference type="Pfam" id="PF25457">
    <property type="entry name" value="IRF-2BP1_2_M"/>
    <property type="match status" value="1"/>
</dbReference>
<dbReference type="Pfam" id="PF25454">
    <property type="entry name" value="zf-C3HC4_IRF-2BP1_2"/>
    <property type="match status" value="1"/>
</dbReference>
<dbReference type="SUPFAM" id="SSF57850">
    <property type="entry name" value="RING/U-box"/>
    <property type="match status" value="1"/>
</dbReference>
<proteinExistence type="evidence at transcript level"/>
<sequence length="690" mass="72849">MSAAQVSSSRRQSCYLCDLPRMPWAMIWDFTEPVCRGCVNYEGADRIEFVIDTARQLKRSHSFQDGRSPGPQGPGSGASNKQHPAVQAALTAKDTAQLNHLDGATKASAASGLERYGLATERGRFEYSLAARLPNGLNGFPKPGEDGPPELNRQSPNSRGRSGHGLIPQLVPGQLSVPPNLLPQTLLNGPPSGNPTGAPHVLGRGPANSSGLGVPPTASSSGDPKRPGSVSSTDQERELKEKQRNSEALSELTESLRNRTEEWVGKPKAVRDALLTLTASAPFDVRFKKDHNLLGRVFAFDAASKPGLLDYELKLFVEYPSGSLNIFSSASGVAKQMYQDCMKDFGRGLSSGFKYLEYEKKHGSGDWRLLGDLLPESVRFFKEMVGADMLPQPYLDPGCPMLPSALVNLPRALAAAAASSSAGSSGQTRSGVRKRKASPEPDSADGQMWITGQSDGIKQLSMAPAGVTPSSSSSAAYGVPSAPPPPLGPGHPQRTTPPESAPPNGPSPMAALQSVTDTLGNAHSPKEGQTGGIPPVHSTTSSARRNSSSPVSPASVTGQRRLNSRNGAGSVELSLQVAPAGGAPHLGMDQVHPQNIPDSPMANSGPLCCTICHERLEDTHFVQCPSVPSHKFCFPCSRDSIKAQGATGEVYCPSGEKCPLVGSNVPWAFMQGEIATILAGDVKVKKERDP</sequence>
<reference key="1">
    <citation type="submission" date="2003-10" db="EMBL/GenBank/DDBJ databases">
        <authorList>
            <consortium name="NIH - Xenopus Gene Collection (XGC) project"/>
        </authorList>
    </citation>
    <scope>NUCLEOTIDE SEQUENCE [LARGE SCALE MRNA]</scope>
    <source>
        <tissue>Spleen</tissue>
    </source>
</reference>
<accession>Q6PCG7</accession>
<protein>
    <recommendedName>
        <fullName>Interferon regulatory factor 2-binding protein-like B</fullName>
    </recommendedName>
    <alternativeName>
        <fullName>Enhanced at puberty protein 1 homolog B</fullName>
    </alternativeName>
</protein>
<organism>
    <name type="scientific">Xenopus laevis</name>
    <name type="common">African clawed frog</name>
    <dbReference type="NCBI Taxonomy" id="8355"/>
    <lineage>
        <taxon>Eukaryota</taxon>
        <taxon>Metazoa</taxon>
        <taxon>Chordata</taxon>
        <taxon>Craniata</taxon>
        <taxon>Vertebrata</taxon>
        <taxon>Euteleostomi</taxon>
        <taxon>Amphibia</taxon>
        <taxon>Batrachia</taxon>
        <taxon>Anura</taxon>
        <taxon>Pipoidea</taxon>
        <taxon>Pipidae</taxon>
        <taxon>Xenopodinae</taxon>
        <taxon>Xenopus</taxon>
        <taxon>Xenopus</taxon>
    </lineage>
</organism>
<feature type="chain" id="PRO_0000328733" description="Interferon regulatory factor 2-binding protein-like B">
    <location>
        <begin position="1"/>
        <end position="690"/>
    </location>
</feature>
<feature type="zinc finger region" description="RING-type; degenerate">
    <location>
        <begin position="609"/>
        <end position="656"/>
    </location>
</feature>
<feature type="region of interest" description="Disordered" evidence="3">
    <location>
        <begin position="59"/>
        <end position="87"/>
    </location>
</feature>
<feature type="region of interest" description="Disordered" evidence="3">
    <location>
        <begin position="136"/>
        <end position="263"/>
    </location>
</feature>
<feature type="region of interest" description="Disordered" evidence="3">
    <location>
        <begin position="418"/>
        <end position="564"/>
    </location>
</feature>
<feature type="coiled-coil region" evidence="2">
    <location>
        <begin position="231"/>
        <end position="259"/>
    </location>
</feature>
<feature type="compositionally biased region" description="Polar residues" evidence="3">
    <location>
        <begin position="207"/>
        <end position="222"/>
    </location>
</feature>
<feature type="compositionally biased region" description="Basic and acidic residues" evidence="3">
    <location>
        <begin position="234"/>
        <end position="245"/>
    </location>
</feature>
<feature type="compositionally biased region" description="Basic and acidic residues" evidence="3">
    <location>
        <begin position="254"/>
        <end position="263"/>
    </location>
</feature>
<feature type="compositionally biased region" description="Low complexity" evidence="3">
    <location>
        <begin position="463"/>
        <end position="480"/>
    </location>
</feature>
<feature type="compositionally biased region" description="Low complexity" evidence="3">
    <location>
        <begin position="538"/>
        <end position="556"/>
    </location>
</feature>
<name>I2BLB_XENLA</name>
<keyword id="KW-0175">Coiled coil</keyword>
<keyword id="KW-0479">Metal-binding</keyword>
<keyword id="KW-0539">Nucleus</keyword>
<keyword id="KW-1185">Reference proteome</keyword>
<keyword id="KW-0862">Zinc</keyword>
<keyword id="KW-0863">Zinc-finger</keyword>
<evidence type="ECO:0000250" key="1"/>
<evidence type="ECO:0000255" key="2"/>
<evidence type="ECO:0000256" key="3">
    <source>
        <dbReference type="SAM" id="MobiDB-lite"/>
    </source>
</evidence>
<evidence type="ECO:0000305" key="4"/>